<feature type="chain" id="PRO_0000371814" description="NADH-quinone oxidoreductase subunit D">
    <location>
        <begin position="1"/>
        <end position="417"/>
    </location>
</feature>
<evidence type="ECO:0000255" key="1">
    <source>
        <dbReference type="HAMAP-Rule" id="MF_01358"/>
    </source>
</evidence>
<reference key="1">
    <citation type="submission" date="2006-08" db="EMBL/GenBank/DDBJ databases">
        <title>Complete sequence of Alkalilimnicola ehrilichei MLHE-1.</title>
        <authorList>
            <person name="Copeland A."/>
            <person name="Lucas S."/>
            <person name="Lapidus A."/>
            <person name="Barry K."/>
            <person name="Detter J.C."/>
            <person name="Glavina del Rio T."/>
            <person name="Hammon N."/>
            <person name="Israni S."/>
            <person name="Dalin E."/>
            <person name="Tice H."/>
            <person name="Pitluck S."/>
            <person name="Sims D."/>
            <person name="Brettin T."/>
            <person name="Bruce D."/>
            <person name="Han C."/>
            <person name="Tapia R."/>
            <person name="Gilna P."/>
            <person name="Schmutz J."/>
            <person name="Larimer F."/>
            <person name="Land M."/>
            <person name="Hauser L."/>
            <person name="Kyrpides N."/>
            <person name="Mikhailova N."/>
            <person name="Oremland R.S."/>
            <person name="Hoeft S.E."/>
            <person name="Switzer-Blum J."/>
            <person name="Kulp T."/>
            <person name="King G."/>
            <person name="Tabita R."/>
            <person name="Witte B."/>
            <person name="Santini J.M."/>
            <person name="Basu P."/>
            <person name="Hollibaugh J.T."/>
            <person name="Xie G."/>
            <person name="Stolz J.F."/>
            <person name="Richardson P."/>
        </authorList>
    </citation>
    <scope>NUCLEOTIDE SEQUENCE [LARGE SCALE GENOMIC DNA]</scope>
    <source>
        <strain>ATCC BAA-1101 / DSM 17681 / MLHE-1</strain>
    </source>
</reference>
<comment type="function">
    <text evidence="1">NDH-1 shuttles electrons from NADH, via FMN and iron-sulfur (Fe-S) centers, to quinones in the respiratory chain. The immediate electron acceptor for the enzyme in this species is believed to be ubiquinone. Couples the redox reaction to proton translocation (for every two electrons transferred, four hydrogen ions are translocated across the cytoplasmic membrane), and thus conserves the redox energy in a proton gradient.</text>
</comment>
<comment type="catalytic activity">
    <reaction evidence="1">
        <text>a quinone + NADH + 5 H(+)(in) = a quinol + NAD(+) + 4 H(+)(out)</text>
        <dbReference type="Rhea" id="RHEA:57888"/>
        <dbReference type="ChEBI" id="CHEBI:15378"/>
        <dbReference type="ChEBI" id="CHEBI:24646"/>
        <dbReference type="ChEBI" id="CHEBI:57540"/>
        <dbReference type="ChEBI" id="CHEBI:57945"/>
        <dbReference type="ChEBI" id="CHEBI:132124"/>
    </reaction>
</comment>
<comment type="subunit">
    <text evidence="1">NDH-1 is composed of 14 different subunits. Subunits NuoB, C, D, E, F, and G constitute the peripheral sector of the complex.</text>
</comment>
<comment type="subcellular location">
    <subcellularLocation>
        <location evidence="1">Cell inner membrane</location>
        <topology evidence="1">Peripheral membrane protein</topology>
        <orientation evidence="1">Cytoplasmic side</orientation>
    </subcellularLocation>
</comment>
<comment type="similarity">
    <text evidence="1">Belongs to the complex I 49 kDa subunit family.</text>
</comment>
<gene>
    <name evidence="1" type="primary">nuoD</name>
    <name type="ordered locus">Mlg_1967</name>
</gene>
<organism>
    <name type="scientific">Alkalilimnicola ehrlichii (strain ATCC BAA-1101 / DSM 17681 / MLHE-1)</name>
    <dbReference type="NCBI Taxonomy" id="187272"/>
    <lineage>
        <taxon>Bacteria</taxon>
        <taxon>Pseudomonadati</taxon>
        <taxon>Pseudomonadota</taxon>
        <taxon>Gammaproteobacteria</taxon>
        <taxon>Chromatiales</taxon>
        <taxon>Ectothiorhodospiraceae</taxon>
        <taxon>Alkalilimnicola</taxon>
    </lineage>
</organism>
<protein>
    <recommendedName>
        <fullName evidence="1">NADH-quinone oxidoreductase subunit D</fullName>
        <ecNumber evidence="1">7.1.1.-</ecNumber>
    </recommendedName>
    <alternativeName>
        <fullName evidence="1">NADH dehydrogenase I subunit D</fullName>
    </alternativeName>
    <alternativeName>
        <fullName evidence="1">NDH-1 subunit D</fullName>
    </alternativeName>
</protein>
<name>NUOD_ALKEH</name>
<sequence>MREFKSYTVNFGPQHPAAHGVLRMVLEMEGETVRRADPHIGLLHRATEKLAESKPYNQSIGYMDRLDYVSMLCNEHAYVMAIEKLLGIEAPIRAQYIRVMFDEITRILNHLMWLGAHGLDVGAMTAFLYCFREREDLMDCYEAVSGARMHAAYYRPGGVYRDLPESMPKYEPSKFRSKKELELMNAARQGTMLDFIEDFTERFPGCVDEYETLLTENRIWRQRLVDVGVVSPERALQLGFSGPMLRGSGIEWDLRKKQPYDVYDRVEFDIPVGTNGDCYDRYLVRIEEMRQSNRIIKQCVDWLRHNPGPVMLEDHKVAPPSREEMKDDMESLIHHFKLFTEGYTTPPGEVYAAVEAPKGEFGCYMISDGANKPYRVKLRAPGFAHLSAMDEMARGHMLADVVAIIGTQDIVFGEIDR</sequence>
<keyword id="KW-0997">Cell inner membrane</keyword>
<keyword id="KW-1003">Cell membrane</keyword>
<keyword id="KW-0472">Membrane</keyword>
<keyword id="KW-0520">NAD</keyword>
<keyword id="KW-0874">Quinone</keyword>
<keyword id="KW-1185">Reference proteome</keyword>
<keyword id="KW-1278">Translocase</keyword>
<keyword id="KW-0813">Transport</keyword>
<keyword id="KW-0830">Ubiquinone</keyword>
<dbReference type="EC" id="7.1.1.-" evidence="1"/>
<dbReference type="EMBL" id="CP000453">
    <property type="protein sequence ID" value="ABI57309.1"/>
    <property type="molecule type" value="Genomic_DNA"/>
</dbReference>
<dbReference type="RefSeq" id="WP_011629703.1">
    <property type="nucleotide sequence ID" value="NC_008340.1"/>
</dbReference>
<dbReference type="SMR" id="Q0A778"/>
<dbReference type="KEGG" id="aeh:Mlg_1967"/>
<dbReference type="eggNOG" id="COG0649">
    <property type="taxonomic scope" value="Bacteria"/>
</dbReference>
<dbReference type="HOGENOM" id="CLU_015134_1_1_6"/>
<dbReference type="OrthoDB" id="9801496at2"/>
<dbReference type="Proteomes" id="UP000001962">
    <property type="component" value="Chromosome"/>
</dbReference>
<dbReference type="GO" id="GO:0005886">
    <property type="term" value="C:plasma membrane"/>
    <property type="evidence" value="ECO:0007669"/>
    <property type="project" value="UniProtKB-SubCell"/>
</dbReference>
<dbReference type="GO" id="GO:0051287">
    <property type="term" value="F:NAD binding"/>
    <property type="evidence" value="ECO:0007669"/>
    <property type="project" value="InterPro"/>
</dbReference>
<dbReference type="GO" id="GO:0050136">
    <property type="term" value="F:NADH:ubiquinone reductase (non-electrogenic) activity"/>
    <property type="evidence" value="ECO:0007669"/>
    <property type="project" value="UniProtKB-UniRule"/>
</dbReference>
<dbReference type="GO" id="GO:0048038">
    <property type="term" value="F:quinone binding"/>
    <property type="evidence" value="ECO:0007669"/>
    <property type="project" value="UniProtKB-KW"/>
</dbReference>
<dbReference type="FunFam" id="1.10.645.10:FF:000005">
    <property type="entry name" value="NADH-quinone oxidoreductase subunit D"/>
    <property type="match status" value="1"/>
</dbReference>
<dbReference type="Gene3D" id="1.10.645.10">
    <property type="entry name" value="Cytochrome-c3 Hydrogenase, chain B"/>
    <property type="match status" value="1"/>
</dbReference>
<dbReference type="HAMAP" id="MF_01358">
    <property type="entry name" value="NDH1_NuoD"/>
    <property type="match status" value="1"/>
</dbReference>
<dbReference type="InterPro" id="IPR001135">
    <property type="entry name" value="NADH_Q_OxRdtase_suD"/>
</dbReference>
<dbReference type="InterPro" id="IPR014029">
    <property type="entry name" value="NADH_UbQ_OxRdtase_49kDa_CS"/>
</dbReference>
<dbReference type="InterPro" id="IPR022885">
    <property type="entry name" value="NDH1_su_D/H"/>
</dbReference>
<dbReference type="InterPro" id="IPR029014">
    <property type="entry name" value="NiFe-Hase_large"/>
</dbReference>
<dbReference type="NCBIfam" id="TIGR01962">
    <property type="entry name" value="NuoD"/>
    <property type="match status" value="1"/>
</dbReference>
<dbReference type="NCBIfam" id="NF004739">
    <property type="entry name" value="PRK06075.1"/>
    <property type="match status" value="1"/>
</dbReference>
<dbReference type="PANTHER" id="PTHR11993:SF10">
    <property type="entry name" value="NADH DEHYDROGENASE [UBIQUINONE] IRON-SULFUR PROTEIN 2, MITOCHONDRIAL"/>
    <property type="match status" value="1"/>
</dbReference>
<dbReference type="PANTHER" id="PTHR11993">
    <property type="entry name" value="NADH-UBIQUINONE OXIDOREDUCTASE 49 KDA SUBUNIT"/>
    <property type="match status" value="1"/>
</dbReference>
<dbReference type="Pfam" id="PF00346">
    <property type="entry name" value="Complex1_49kDa"/>
    <property type="match status" value="1"/>
</dbReference>
<dbReference type="SUPFAM" id="SSF56762">
    <property type="entry name" value="HydB/Nqo4-like"/>
    <property type="match status" value="1"/>
</dbReference>
<dbReference type="PROSITE" id="PS00535">
    <property type="entry name" value="COMPLEX1_49K"/>
    <property type="match status" value="1"/>
</dbReference>
<proteinExistence type="inferred from homology"/>
<accession>Q0A778</accession>